<comment type="similarity">
    <text evidence="1">Belongs to the UPF0246 family.</text>
</comment>
<organism>
    <name type="scientific">Janthinobacterium sp. (strain Marseille)</name>
    <name type="common">Minibacterium massiliensis</name>
    <dbReference type="NCBI Taxonomy" id="375286"/>
    <lineage>
        <taxon>Bacteria</taxon>
        <taxon>Pseudomonadati</taxon>
        <taxon>Pseudomonadota</taxon>
        <taxon>Betaproteobacteria</taxon>
        <taxon>Burkholderiales</taxon>
        <taxon>Oxalobacteraceae</taxon>
        <taxon>Janthinobacterium</taxon>
    </lineage>
</organism>
<accession>A6SXS8</accession>
<dbReference type="EMBL" id="CP000269">
    <property type="protein sequence ID" value="ABR89493.1"/>
    <property type="molecule type" value="Genomic_DNA"/>
</dbReference>
<dbReference type="RefSeq" id="WP_012079241.1">
    <property type="nucleotide sequence ID" value="NC_009659.1"/>
</dbReference>
<dbReference type="SMR" id="A6SXS8"/>
<dbReference type="STRING" id="375286.mma_1385"/>
<dbReference type="KEGG" id="mms:mma_1385"/>
<dbReference type="eggNOG" id="COG3022">
    <property type="taxonomic scope" value="Bacteria"/>
</dbReference>
<dbReference type="HOGENOM" id="CLU_061989_0_0_4"/>
<dbReference type="OrthoDB" id="9777133at2"/>
<dbReference type="Proteomes" id="UP000006388">
    <property type="component" value="Chromosome"/>
</dbReference>
<dbReference type="GO" id="GO:0005829">
    <property type="term" value="C:cytosol"/>
    <property type="evidence" value="ECO:0007669"/>
    <property type="project" value="TreeGrafter"/>
</dbReference>
<dbReference type="GO" id="GO:0033194">
    <property type="term" value="P:response to hydroperoxide"/>
    <property type="evidence" value="ECO:0007669"/>
    <property type="project" value="TreeGrafter"/>
</dbReference>
<dbReference type="HAMAP" id="MF_00652">
    <property type="entry name" value="UPF0246"/>
    <property type="match status" value="1"/>
</dbReference>
<dbReference type="InterPro" id="IPR005583">
    <property type="entry name" value="YaaA"/>
</dbReference>
<dbReference type="NCBIfam" id="NF002541">
    <property type="entry name" value="PRK02101.1-1"/>
    <property type="match status" value="1"/>
</dbReference>
<dbReference type="NCBIfam" id="NF002542">
    <property type="entry name" value="PRK02101.1-3"/>
    <property type="match status" value="1"/>
</dbReference>
<dbReference type="PANTHER" id="PTHR30283:SF4">
    <property type="entry name" value="PEROXIDE STRESS RESISTANCE PROTEIN YAAA"/>
    <property type="match status" value="1"/>
</dbReference>
<dbReference type="PANTHER" id="PTHR30283">
    <property type="entry name" value="PEROXIDE STRESS RESPONSE PROTEIN YAAA"/>
    <property type="match status" value="1"/>
</dbReference>
<dbReference type="Pfam" id="PF03883">
    <property type="entry name" value="H2O2_YaaD"/>
    <property type="match status" value="1"/>
</dbReference>
<evidence type="ECO:0000255" key="1">
    <source>
        <dbReference type="HAMAP-Rule" id="MF_00652"/>
    </source>
</evidence>
<gene>
    <name type="ordered locus">mma_1385</name>
</gene>
<feature type="chain" id="PRO_1000061608" description="UPF0246 protein mma_1385">
    <location>
        <begin position="1"/>
        <end position="258"/>
    </location>
</feature>
<proteinExistence type="inferred from homology"/>
<name>Y1385_JANMA</name>
<protein>
    <recommendedName>
        <fullName evidence="1">UPF0246 protein mma_1385</fullName>
    </recommendedName>
</protein>
<sequence length="258" mass="28924">MLIVLSPAKTLDYDTPAHTEISSKPDFIKQSAELIKILRQSSPAQIASLMRISDPLASLNANRFAAWSPKFTQKNSKQAMLAFNGDVYEGLDAASMDAKQLAYAQSHIRILSGLYGVLRPLDLMQPYRLEMGTRLANAAGKDLYAFWGNTVTETLNQRIAEQQSEALVNLASEEYFKVVKPALLKAPVITPVFQDWKNGQYKIISFYAKRARGLMARYAATKGIKRPEELKSFDVDGYEFDAAASNEKTWMFRRKVGI</sequence>
<reference key="1">
    <citation type="journal article" date="2007" name="PLoS Genet.">
        <title>Genome analysis of Minibacterium massiliensis highlights the convergent evolution of water-living bacteria.</title>
        <authorList>
            <person name="Audic S."/>
            <person name="Robert C."/>
            <person name="Campagna B."/>
            <person name="Parinello H."/>
            <person name="Claverie J.-M."/>
            <person name="Raoult D."/>
            <person name="Drancourt M."/>
        </authorList>
    </citation>
    <scope>NUCLEOTIDE SEQUENCE [LARGE SCALE GENOMIC DNA]</scope>
    <source>
        <strain>Marseille</strain>
    </source>
</reference>